<organism>
    <name type="scientific">Xenopus laevis</name>
    <name type="common">African clawed frog</name>
    <dbReference type="NCBI Taxonomy" id="8355"/>
    <lineage>
        <taxon>Eukaryota</taxon>
        <taxon>Metazoa</taxon>
        <taxon>Chordata</taxon>
        <taxon>Craniata</taxon>
        <taxon>Vertebrata</taxon>
        <taxon>Euteleostomi</taxon>
        <taxon>Amphibia</taxon>
        <taxon>Batrachia</taxon>
        <taxon>Anura</taxon>
        <taxon>Pipoidea</taxon>
        <taxon>Pipidae</taxon>
        <taxon>Xenopodinae</taxon>
        <taxon>Xenopus</taxon>
        <taxon>Xenopus</taxon>
    </lineage>
</organism>
<protein>
    <recommendedName>
        <fullName>Protein Wnt-4</fullName>
        <shortName>XWnt-4</shortName>
    </recommendedName>
</protein>
<feature type="signal peptide" evidence="4">
    <location>
        <begin position="1"/>
        <end position="22"/>
    </location>
</feature>
<feature type="chain" id="PRO_0000041426" description="Protein Wnt-4">
    <location>
        <begin position="23"/>
        <end position="351"/>
    </location>
</feature>
<feature type="lipid moiety-binding region" description="O-palmitoleoyl serine; by PORCN" evidence="3">
    <location>
        <position position="212"/>
    </location>
</feature>
<feature type="glycosylation site" description="N-linked (GlcNAc...) asparagine" evidence="4">
    <location>
        <position position="88"/>
    </location>
</feature>
<feature type="glycosylation site" description="N-linked (GlcNAc...) asparagine" evidence="4">
    <location>
        <position position="297"/>
    </location>
</feature>
<feature type="disulfide bond" evidence="2">
    <location>
        <begin position="78"/>
        <end position="89"/>
    </location>
</feature>
<feature type="disulfide bond" evidence="2">
    <location>
        <begin position="128"/>
        <end position="136"/>
    </location>
</feature>
<feature type="disulfide bond" evidence="2">
    <location>
        <begin position="138"/>
        <end position="155"/>
    </location>
</feature>
<feature type="disulfide bond" evidence="2">
    <location>
        <begin position="206"/>
        <end position="220"/>
    </location>
</feature>
<feature type="disulfide bond" evidence="2">
    <location>
        <begin position="208"/>
        <end position="215"/>
    </location>
</feature>
<feature type="disulfide bond" evidence="2">
    <location>
        <begin position="280"/>
        <end position="311"/>
    </location>
</feature>
<feature type="disulfide bond" evidence="2">
    <location>
        <begin position="296"/>
        <end position="306"/>
    </location>
</feature>
<feature type="disulfide bond" evidence="2">
    <location>
        <begin position="310"/>
        <end position="350"/>
    </location>
</feature>
<feature type="disulfide bond" evidence="2">
    <location>
        <begin position="326"/>
        <end position="341"/>
    </location>
</feature>
<feature type="disulfide bond" evidence="2">
    <location>
        <begin position="328"/>
        <end position="338"/>
    </location>
</feature>
<feature type="disulfide bond" evidence="2">
    <location>
        <begin position="333"/>
        <end position="334"/>
    </location>
</feature>
<feature type="splice variant" id="VSP_040030" description="In isoform 2." evidence="10">
    <original>MTPEYFLRSLLMMILAVFSANASNWL</original>
    <variation>MDCQTAKITFSEGSVSSKEEQLDCQPPCLQVFQIYAFSMKAW</variation>
    <location>
        <begin position="1"/>
        <end position="26"/>
    </location>
</feature>
<feature type="sequence conflict" description="In Ref. 2; AAH87460." evidence="11" ref="2">
    <original>P</original>
    <variation>L</variation>
    <location>
        <position position="49"/>
    </location>
</feature>
<feature type="sequence conflict" description="In Ref. 3; AAA69970." evidence="11" ref="3">
    <original>Q</original>
    <variation>H</variation>
    <location>
        <position position="295"/>
    </location>
</feature>
<feature type="sequence conflict" description="In Ref. 3; AAA69970." evidence="11" ref="3">
    <original>FVKCKQCHKVVEMHTCR</original>
    <variation>SRVDLQACNLVFYSVT</variation>
    <location>
        <begin position="335"/>
        <end position="351"/>
    </location>
</feature>
<reference key="1">
    <citation type="journal article" date="1992" name="Development">
        <title>Analysis of Xwnt-4 in embryos of Xenopus laevis: a Wnt family member expressed in the brain and floor plate.</title>
        <authorList>
            <person name="McGrew L.L."/>
            <person name="Otte A.P."/>
            <person name="Moon R.T."/>
        </authorList>
    </citation>
    <scope>NUCLEOTIDE SEQUENCE [MRNA] (ISOFORM 1)</scope>
    <scope>TISSUE SPECIFICITY</scope>
    <scope>DEVELOPMENTAL STAGE</scope>
    <source>
        <tissue>Neurula</tissue>
    </source>
</reference>
<reference key="2">
    <citation type="submission" date="2004-12" db="EMBL/GenBank/DDBJ databases">
        <authorList>
            <consortium name="NIH - Xenopus Gene Collection (XGC) project"/>
        </authorList>
    </citation>
    <scope>NUCLEOTIDE SEQUENCE [LARGE SCALE MRNA] (ISOFORM 2)</scope>
    <source>
        <tissue>Testis</tissue>
    </source>
</reference>
<reference key="3">
    <citation type="journal article" date="1991" name="Dev. Biol.">
        <title>Isolation of cDNAs partially encoding four Xenopus Wnt-1/int-1-related proteins and characterization of their transient expression during embryonic development.</title>
        <authorList>
            <person name="Christian J.L."/>
            <person name="Gavin B.J."/>
            <person name="McMahon A.P."/>
            <person name="Moon R.T."/>
        </authorList>
    </citation>
    <scope>NUCLEOTIDE SEQUENCE [MRNA] OF 261-351 (ISOFORMS 1/2)</scope>
    <scope>TISSUE SPECIFICITY</scope>
    <scope>DEVELOPMENTAL STAGE</scope>
    <source>
        <tissue>Embryo</tissue>
    </source>
</reference>
<reference key="4">
    <citation type="journal article" date="2002" name="Dev. Biol.">
        <title>Essential function of Wnt-4 for tubulogenesis in the Xenopus pronephric kidney.</title>
        <authorList>
            <person name="Saulnier D.M."/>
            <person name="Ghanbari H."/>
            <person name="Brandli A.W."/>
        </authorList>
    </citation>
    <scope>FUNCTION</scope>
    <scope>TISSUE SPECIFICITY</scope>
</reference>
<reference key="5">
    <citation type="journal article" date="2009" name="Development">
        <title>Notch activates Wnt-4 signalling to control medio-lateral patterning of the pronephros.</title>
        <authorList>
            <person name="Naylor R.W."/>
            <person name="Jones E.A."/>
        </authorList>
    </citation>
    <scope>FUNCTION</scope>
    <scope>INDUCTION</scope>
</reference>
<reference key="6">
    <citation type="journal article" date="2009" name="Mol. Cell. Biol.">
        <title>Xenopus Wntless and the retromer complex cooperate to regulate XWnt4 secretion.</title>
        <authorList>
            <person name="Kim H."/>
            <person name="Cheong S.M."/>
            <person name="Ryu J."/>
            <person name="Jung H.J."/>
            <person name="Jho E.H."/>
            <person name="Han J.K."/>
        </authorList>
    </citation>
    <scope>SUBCELLULAR LOCATION</scope>
</reference>
<comment type="function">
    <text evidence="5 8">Ligand for members of the frizzled family of seven transmembrane receptors. Plays an important role in embryonic kidney development. Acts downstream of Notch signaling during pronephric kidney development. During early pronephros development, patterns the proximal pronephric anlagen to promote glomus and nephrostome formation. Also required later in pronephros development for tubulogenesis.</text>
</comment>
<comment type="subcellular location">
    <subcellularLocation>
        <location evidence="7">Secreted</location>
        <location evidence="7">Extracellular space</location>
        <location evidence="7">Extracellular matrix</location>
    </subcellularLocation>
</comment>
<comment type="alternative products">
    <event type="alternative splicing"/>
    <isoform>
        <id>P49338-1</id>
        <name>1</name>
        <sequence type="displayed"/>
    </isoform>
    <isoform>
        <id>P49338-2</id>
        <name>2</name>
        <sequence type="described" ref="VSP_040030"/>
    </isoform>
</comment>
<comment type="tissue specificity">
    <text evidence="5 6 9">Expressed in the brain and floor plate. In the developing pronephros, expressed in the proximal tubules and nephrostomes but absent from the pronephric duct.</text>
</comment>
<comment type="developmental stage">
    <text evidence="6 9">Expression during the neurula through tadpole stages of development.</text>
</comment>
<comment type="induction">
    <text evidence="8">By Notch signaling in the pronephros.</text>
</comment>
<comment type="PTM">
    <text evidence="1 3">Palmitoleoylation is required for efficient binding to frizzled receptors. Depalmitoleoylation leads to Wnt signaling pathway inhibition.</text>
</comment>
<comment type="similarity">
    <text evidence="11">Belongs to the Wnt family.</text>
</comment>
<proteinExistence type="evidence at transcript level"/>
<keyword id="KW-0025">Alternative splicing</keyword>
<keyword id="KW-0217">Developmental protein</keyword>
<keyword id="KW-1015">Disulfide bond</keyword>
<keyword id="KW-0272">Extracellular matrix</keyword>
<keyword id="KW-0325">Glycoprotein</keyword>
<keyword id="KW-0449">Lipoprotein</keyword>
<keyword id="KW-1185">Reference proteome</keyword>
<keyword id="KW-0964">Secreted</keyword>
<keyword id="KW-0732">Signal</keyword>
<keyword id="KW-0879">Wnt signaling pathway</keyword>
<accession>P49338</accession>
<accession>Q5PPW9</accession>
<accession>Q91927</accession>
<evidence type="ECO:0000250" key="1">
    <source>
        <dbReference type="UniProtKB" id="P27467"/>
    </source>
</evidence>
<evidence type="ECO:0000250" key="2">
    <source>
        <dbReference type="UniProtKB" id="P28026"/>
    </source>
</evidence>
<evidence type="ECO:0000250" key="3">
    <source>
        <dbReference type="UniProtKB" id="P56704"/>
    </source>
</evidence>
<evidence type="ECO:0000255" key="4"/>
<evidence type="ECO:0000269" key="5">
    <source>
    </source>
</evidence>
<evidence type="ECO:0000269" key="6">
    <source>
    </source>
</evidence>
<evidence type="ECO:0000269" key="7">
    <source>
    </source>
</evidence>
<evidence type="ECO:0000269" key="8">
    <source>
    </source>
</evidence>
<evidence type="ECO:0000269" key="9">
    <source>
    </source>
</evidence>
<evidence type="ECO:0000303" key="10">
    <source ref="2"/>
</evidence>
<evidence type="ECO:0000305" key="11"/>
<name>WNT4_XENLA</name>
<dbReference type="EMBL" id="U13183">
    <property type="protein sequence ID" value="AAA20879.1"/>
    <property type="molecule type" value="mRNA"/>
</dbReference>
<dbReference type="EMBL" id="BC087460">
    <property type="protein sequence ID" value="AAH87460.1"/>
    <property type="molecule type" value="mRNA"/>
</dbReference>
<dbReference type="EMBL" id="M55055">
    <property type="protein sequence ID" value="AAA69970.1"/>
    <property type="molecule type" value="mRNA"/>
</dbReference>
<dbReference type="PIR" id="A49146">
    <property type="entry name" value="A49146"/>
</dbReference>
<dbReference type="RefSeq" id="NP_001081197.1">
    <property type="nucleotide sequence ID" value="NM_001087728.1"/>
</dbReference>
<dbReference type="RefSeq" id="NP_001239014.1">
    <molecule id="P49338-1"/>
    <property type="nucleotide sequence ID" value="NM_001252085.1"/>
</dbReference>
<dbReference type="SMR" id="P49338"/>
<dbReference type="GlyCosmos" id="P49338">
    <property type="glycosylation" value="2 sites, No reported glycans"/>
</dbReference>
<dbReference type="DNASU" id="397706"/>
<dbReference type="GeneID" id="397706"/>
<dbReference type="KEGG" id="xla:397706"/>
<dbReference type="AGR" id="Xenbase:XB-GENE-865047"/>
<dbReference type="CTD" id="397706"/>
<dbReference type="Xenbase" id="XB-GENE-865047">
    <property type="gene designation" value="wnt4.L"/>
</dbReference>
<dbReference type="OrthoDB" id="5945655at2759"/>
<dbReference type="Proteomes" id="UP000186698">
    <property type="component" value="Chromosome 7L"/>
</dbReference>
<dbReference type="Bgee" id="397706">
    <property type="expression patterns" value="Expressed in neurula embryo and 13 other cell types or tissues"/>
</dbReference>
<dbReference type="GO" id="GO:0005576">
    <property type="term" value="C:extracellular region"/>
    <property type="evidence" value="ECO:0000314"/>
    <property type="project" value="UniProtKB"/>
</dbReference>
<dbReference type="GO" id="GO:0005615">
    <property type="term" value="C:extracellular space"/>
    <property type="evidence" value="ECO:0000318"/>
    <property type="project" value="GO_Central"/>
</dbReference>
<dbReference type="GO" id="GO:0005125">
    <property type="term" value="F:cytokine activity"/>
    <property type="evidence" value="ECO:0000318"/>
    <property type="project" value="GO_Central"/>
</dbReference>
<dbReference type="GO" id="GO:0005109">
    <property type="term" value="F:frizzled binding"/>
    <property type="evidence" value="ECO:0000318"/>
    <property type="project" value="GO_Central"/>
</dbReference>
<dbReference type="GO" id="GO:0060070">
    <property type="term" value="P:canonical Wnt signaling pathway"/>
    <property type="evidence" value="ECO:0000318"/>
    <property type="project" value="GO_Central"/>
</dbReference>
<dbReference type="GO" id="GO:0045165">
    <property type="term" value="P:cell fate commitment"/>
    <property type="evidence" value="ECO:0000318"/>
    <property type="project" value="GO_Central"/>
</dbReference>
<dbReference type="GO" id="GO:0009880">
    <property type="term" value="P:embryonic pattern specification"/>
    <property type="evidence" value="ECO:0000315"/>
    <property type="project" value="UniProtKB"/>
</dbReference>
<dbReference type="GO" id="GO:0072013">
    <property type="term" value="P:glomus development"/>
    <property type="evidence" value="ECO:0000315"/>
    <property type="project" value="UniProtKB"/>
</dbReference>
<dbReference type="GO" id="GO:0039018">
    <property type="term" value="P:nephrostome development"/>
    <property type="evidence" value="ECO:0000315"/>
    <property type="project" value="UniProtKB"/>
</dbReference>
<dbReference type="GO" id="GO:0030182">
    <property type="term" value="P:neuron differentiation"/>
    <property type="evidence" value="ECO:0000318"/>
    <property type="project" value="GO_Central"/>
</dbReference>
<dbReference type="GO" id="GO:0039020">
    <property type="term" value="P:pronephric nephron tubule development"/>
    <property type="evidence" value="ECO:0000315"/>
    <property type="project" value="UniProtKB"/>
</dbReference>
<dbReference type="CDD" id="cd19336">
    <property type="entry name" value="Wnt_Wnt4"/>
    <property type="match status" value="1"/>
</dbReference>
<dbReference type="FunFam" id="3.30.2460.20:FF:000001">
    <property type="entry name" value="Wnt homolog"/>
    <property type="match status" value="1"/>
</dbReference>
<dbReference type="Gene3D" id="3.30.2460.20">
    <property type="match status" value="1"/>
</dbReference>
<dbReference type="InterPro" id="IPR005817">
    <property type="entry name" value="Wnt"/>
</dbReference>
<dbReference type="InterPro" id="IPR009142">
    <property type="entry name" value="Wnt4"/>
</dbReference>
<dbReference type="InterPro" id="IPR043158">
    <property type="entry name" value="Wnt_C"/>
</dbReference>
<dbReference type="InterPro" id="IPR018161">
    <property type="entry name" value="Wnt_CS"/>
</dbReference>
<dbReference type="PANTHER" id="PTHR12027:SF101">
    <property type="entry name" value="PROTEIN WNT-4"/>
    <property type="match status" value="1"/>
</dbReference>
<dbReference type="PANTHER" id="PTHR12027">
    <property type="entry name" value="WNT RELATED"/>
    <property type="match status" value="1"/>
</dbReference>
<dbReference type="Pfam" id="PF00110">
    <property type="entry name" value="wnt"/>
    <property type="match status" value="1"/>
</dbReference>
<dbReference type="PRINTS" id="PR01844">
    <property type="entry name" value="WNT4PROTEIN"/>
</dbReference>
<dbReference type="PRINTS" id="PR01349">
    <property type="entry name" value="WNTPROTEIN"/>
</dbReference>
<dbReference type="SMART" id="SM00097">
    <property type="entry name" value="WNT1"/>
    <property type="match status" value="1"/>
</dbReference>
<dbReference type="PROSITE" id="PS00246">
    <property type="entry name" value="WNT1"/>
    <property type="match status" value="1"/>
</dbReference>
<sequence length="351" mass="39167">MTPEYFLRSLLMMILAVFSANASNWLYLAKLSSVGSISEEETCEKLKGPIQRQVQMCKRNLEVMDSVRRGAQLAIEECQYQFRNRRWNCSTLDTLPVFGKVVTQGTREAAFVYAISSAGVAFAVTRACSSGDLEKCGCDRTVHGVSPQGFQWSGCSDNILYGVAFSQSFVDVRERSKGGSSSRALMNLHNNEAGRKAILNNMRVECKCHGVSGSCEVKTCWKAMPTFRKVGNVLKEKFDGATEVEQKKIGSTKVLVPKNSQFKPHTDEDLVYLDSSPDFCDHDLKNGVLGTTGRQCNKTSKAIDGCELMCCGRGFHTEEVEIVERCSCKFHWCCFVKCKQCHKVVEMHTCR</sequence>
<gene>
    <name type="primary">wnt4</name>
</gene>